<protein>
    <recommendedName>
        <fullName>Invertase 1</fullName>
        <ecNumber>3.2.1.26</ecNumber>
    </recommendedName>
    <alternativeName>
        <fullName>Beta-fructofuranosidase 1</fullName>
    </alternativeName>
    <alternativeName>
        <fullName>Saccharase</fullName>
    </alternativeName>
</protein>
<keyword id="KW-0024">Alternative initiation</keyword>
<keyword id="KW-0963">Cytoplasm</keyword>
<keyword id="KW-0325">Glycoprotein</keyword>
<keyword id="KW-0326">Glycosidase</keyword>
<keyword id="KW-0378">Hydrolase</keyword>
<keyword id="KW-0964">Secreted</keyword>
<keyword id="KW-0732">Signal</keyword>
<gene>
    <name type="primary">SUC1</name>
</gene>
<proteinExistence type="evidence at protein level"/>
<organism>
    <name type="scientific">Saccharomyces cerevisiae</name>
    <name type="common">Baker's yeast</name>
    <dbReference type="NCBI Taxonomy" id="4932"/>
    <lineage>
        <taxon>Eukaryota</taxon>
        <taxon>Fungi</taxon>
        <taxon>Dikarya</taxon>
        <taxon>Ascomycota</taxon>
        <taxon>Saccharomycotina</taxon>
        <taxon>Saccharomycetes</taxon>
        <taxon>Saccharomycetales</taxon>
        <taxon>Saccharomycetaceae</taxon>
        <taxon>Saccharomyces</taxon>
    </lineage>
</organism>
<accession>P10594</accession>
<feature type="signal peptide">
    <location>
        <begin position="1"/>
        <end position="19"/>
    </location>
</feature>
<feature type="chain" id="PRO_0000033398" description="Invertase 1">
    <location>
        <begin position="20"/>
        <end position="532"/>
    </location>
</feature>
<feature type="active site" evidence="3">
    <location>
        <position position="42"/>
    </location>
</feature>
<feature type="binding site" evidence="1">
    <location>
        <begin position="39"/>
        <end position="42"/>
    </location>
    <ligand>
        <name>substrate</name>
    </ligand>
</feature>
<feature type="binding site" evidence="1">
    <location>
        <position position="60"/>
    </location>
    <ligand>
        <name>substrate</name>
    </ligand>
</feature>
<feature type="binding site" evidence="1">
    <location>
        <begin position="102"/>
        <end position="103"/>
    </location>
    <ligand>
        <name>substrate</name>
    </ligand>
</feature>
<feature type="binding site" evidence="1">
    <location>
        <begin position="170"/>
        <end position="171"/>
    </location>
    <ligand>
        <name>substrate</name>
    </ligand>
</feature>
<feature type="binding site" evidence="1">
    <location>
        <position position="223"/>
    </location>
    <ligand>
        <name>substrate</name>
    </ligand>
</feature>
<feature type="binding site" evidence="1">
    <location>
        <position position="311"/>
    </location>
    <ligand>
        <name>substrate</name>
    </ligand>
</feature>
<feature type="glycosylation site" description="N-linked (GlcNAc...) asparagine" evidence="2">
    <location>
        <position position="23"/>
    </location>
</feature>
<feature type="glycosylation site" description="N-linked (GlcNAc...) asparagine" evidence="2">
    <location>
        <position position="64"/>
    </location>
</feature>
<feature type="glycosylation site" description="N-linked (GlcNAc...) asparagine" evidence="2">
    <location>
        <position position="111"/>
    </location>
</feature>
<feature type="glycosylation site" description="N-linked (GlcNAc...) asparagine" evidence="2">
    <location>
        <position position="112"/>
    </location>
</feature>
<feature type="glycosylation site" description="N-linked (GlcNAc...) asparagine" evidence="2">
    <location>
        <position position="118"/>
    </location>
</feature>
<feature type="glycosylation site" description="N-linked (GlcNAc...) asparagine" evidence="2">
    <location>
        <position position="165"/>
    </location>
</feature>
<feature type="glycosylation site" description="N-linked (GlcNAc...) asparagine" evidence="2">
    <location>
        <position position="275"/>
    </location>
</feature>
<feature type="glycosylation site" description="N-linked (GlcNAc...) asparagine" evidence="2">
    <location>
        <position position="356"/>
    </location>
</feature>
<feature type="glycosylation site" description="N-linked (GlcNAc...) asparagine" evidence="2">
    <location>
        <position position="369"/>
    </location>
</feature>
<feature type="glycosylation site" description="N-linked (GlcNAc...) asparagine" evidence="2">
    <location>
        <position position="384"/>
    </location>
</feature>
<feature type="glycosylation site" description="N-linked (GlcNAc...) asparagine" evidence="2">
    <location>
        <position position="398"/>
    </location>
</feature>
<feature type="glycosylation site" description="N-linked (GlcNAc...) asparagine" evidence="2">
    <location>
        <position position="512"/>
    </location>
</feature>
<feature type="splice variant" id="VSP_019610" description="In isoform Intracellular." evidence="5">
    <location>
        <begin position="1"/>
        <end position="20"/>
    </location>
</feature>
<comment type="catalytic activity">
    <reaction evidence="3">
        <text>Hydrolysis of terminal non-reducing beta-D-fructofuranoside residues in beta-D-fructofuranosides.</text>
        <dbReference type="EC" id="3.2.1.26"/>
    </reaction>
</comment>
<comment type="subcellular location">
    <molecule>Isoform Intracellular</molecule>
    <subcellularLocation>
        <location evidence="1">Cytoplasm</location>
    </subcellularLocation>
</comment>
<comment type="subcellular location">
    <molecule>Isoform Secreted</molecule>
    <subcellularLocation>
        <location>Secreted</location>
    </subcellularLocation>
</comment>
<comment type="alternative products">
    <event type="alternative initiation"/>
    <isoform>
        <id>P10594-1</id>
        <name>Secreted</name>
        <sequence type="displayed"/>
    </isoform>
    <isoform>
        <id>P10594-2</id>
        <name>Intracellular</name>
        <sequence type="described" ref="VSP_019610"/>
    </isoform>
</comment>
<comment type="PTM">
    <text evidence="4">Isoform Secreted is glycosylated. Isoform Intracellular is not glycosylated.</text>
</comment>
<comment type="miscellaneous">
    <molecule>Isoform Intracellular</molecule>
    <text evidence="5">Produced by alternative initiation at Met-21 of isoform Secreted.</text>
</comment>
<comment type="similarity">
    <text evidence="5">Belongs to the glycosyl hydrolase 32 family.</text>
</comment>
<reference key="1">
    <citation type="journal article" date="1988" name="Mol. Gen. Genet.">
        <title>Structural analysis of the 5' regions of yeast SUC genes revealed analogous palindromes in SUC, MAL and GAL.</title>
        <authorList>
            <person name="Hohmann S."/>
            <person name="Gozalbo D."/>
        </authorList>
    </citation>
    <scope>NUCLEOTIDE SEQUENCE [GENOMIC DNA] OF 1-73</scope>
</reference>
<reference key="2">
    <citation type="submission" date="1988-11" db="EMBL/GenBank/DDBJ databases">
        <authorList>
            <person name="Hohmann S."/>
        </authorList>
    </citation>
    <scope>NUCLEOTIDE SEQUENCE [GENOMIC DNA]</scope>
</reference>
<reference key="3">
    <citation type="journal article" date="1981" name="Mol. Cell. Biol.">
        <title>SUC1 gene of Saccharomyces: a structural gene for the large (glycoprotein) and small (carbohydrate-free) forms of invertase.</title>
        <authorList>
            <person name="Rodriguez L."/>
            <person name="Lampen J.O."/>
            <person name="MacKay V.L."/>
        </authorList>
    </citation>
    <scope>IDENTIFICATION OF ISOFORMS</scope>
    <scope>GLYCOSYLATION</scope>
</reference>
<sequence length="532" mass="60570">MLLQAFLFLLAGFAAKISASMTNETSDRPLVHFTPNKGWMNDPNGLWYDAKEGKWHLYFQYNPNDTVWGLPLFWGHATSDDLTHWQDEPVAIAPKRKDSGAYSGSMVIDYNNTSGFFNDTIDPRQRCVAIWTYNTPESEEQYISYSLDGGYTFTEYQKNPVLAANSTQFRDPKVFWYEPSKKWIMTAAKSQDYKIEIYSSDDLKSWKLESAFANEGFLGYQYECPGLIEVPSEQDPSKSHWVMFISINPGAPAGGSFNQYFVGSFNGHHFEAFDNQSRVVDFGKDYYALQTFFNTDPTYGSALGIAWASNWEYSAFVPSNPWRSSMSLVRPFSLNTEYQANPETELINLKAEPILNISSAGPWSRFATNTTLTKANSYNVDLSNSTGTLEFELVYAVNTTQTISKSVFADLSLWFKGLEDPEEYLRMGFEVSASSFFLDRGNSKVKFVKENPYFTNRMSVNNQPFKSENDLSYYKVYGLLDQNILELYFNDGDVVSTNTYFMTTGNALGSVNMTTGVDNLFYIDKFQVREVK</sequence>
<dbReference type="EC" id="3.2.1.26"/>
<dbReference type="EMBL" id="X07570">
    <property type="protein sequence ID" value="CAA30457.1"/>
    <property type="molecule type" value="Genomic_DNA"/>
</dbReference>
<dbReference type="PIR" id="S27372">
    <property type="entry name" value="S27372"/>
</dbReference>
<dbReference type="SMR" id="P10594"/>
<dbReference type="Allergome" id="8263">
    <property type="allergen name" value="Sac c Invertase"/>
</dbReference>
<dbReference type="CAZy" id="GH32">
    <property type="family name" value="Glycoside Hydrolase Family 32"/>
</dbReference>
<dbReference type="GlyCosmos" id="P10594">
    <property type="glycosylation" value="12 sites, No reported glycans"/>
</dbReference>
<dbReference type="SGD" id="S000029531">
    <property type="gene designation" value="SUC1"/>
</dbReference>
<dbReference type="VEuPathDB" id="FungiDB:YIL162W"/>
<dbReference type="GO" id="GO:0005576">
    <property type="term" value="C:extracellular region"/>
    <property type="evidence" value="ECO:0000305"/>
    <property type="project" value="SGD"/>
</dbReference>
<dbReference type="GO" id="GO:0000324">
    <property type="term" value="C:fungal-type vacuole"/>
    <property type="evidence" value="ECO:0007669"/>
    <property type="project" value="TreeGrafter"/>
</dbReference>
<dbReference type="GO" id="GO:0004564">
    <property type="term" value="F:beta-fructofuranosidase activity"/>
    <property type="evidence" value="ECO:0000314"/>
    <property type="project" value="SGD"/>
</dbReference>
<dbReference type="GO" id="GO:0004575">
    <property type="term" value="F:sucrose alpha-glucosidase activity"/>
    <property type="evidence" value="ECO:0007669"/>
    <property type="project" value="TreeGrafter"/>
</dbReference>
<dbReference type="GO" id="GO:0036008">
    <property type="term" value="P:sucrose catabolic process to fructose-6-phosphate and glucose-6-phosphate"/>
    <property type="evidence" value="ECO:0000314"/>
    <property type="project" value="SGD"/>
</dbReference>
<dbReference type="CDD" id="cd18622">
    <property type="entry name" value="GH32_Inu-like"/>
    <property type="match status" value="1"/>
</dbReference>
<dbReference type="FunFam" id="2.115.10.20:FF:000002">
    <property type="entry name" value="Invertase 2"/>
    <property type="match status" value="1"/>
</dbReference>
<dbReference type="FunFam" id="2.60.120.560:FF:000004">
    <property type="entry name" value="Invertase 2"/>
    <property type="match status" value="1"/>
</dbReference>
<dbReference type="Gene3D" id="2.60.120.560">
    <property type="entry name" value="Exo-inulinase, domain 1"/>
    <property type="match status" value="1"/>
</dbReference>
<dbReference type="Gene3D" id="2.115.10.20">
    <property type="entry name" value="Glycosyl hydrolase domain, family 43"/>
    <property type="match status" value="1"/>
</dbReference>
<dbReference type="InterPro" id="IPR013320">
    <property type="entry name" value="ConA-like_dom_sf"/>
</dbReference>
<dbReference type="InterPro" id="IPR001362">
    <property type="entry name" value="Glyco_hydro_32"/>
</dbReference>
<dbReference type="InterPro" id="IPR018053">
    <property type="entry name" value="Glyco_hydro_32_AS"/>
</dbReference>
<dbReference type="InterPro" id="IPR013189">
    <property type="entry name" value="Glyco_hydro_32_C"/>
</dbReference>
<dbReference type="InterPro" id="IPR013148">
    <property type="entry name" value="Glyco_hydro_32_N"/>
</dbReference>
<dbReference type="InterPro" id="IPR023296">
    <property type="entry name" value="Glyco_hydro_beta-prop_sf"/>
</dbReference>
<dbReference type="PANTHER" id="PTHR42800">
    <property type="entry name" value="EXOINULINASE INUD (AFU_ORTHOLOGUE AFUA_5G00480)"/>
    <property type="match status" value="1"/>
</dbReference>
<dbReference type="PANTHER" id="PTHR42800:SF4">
    <property type="entry name" value="INVERTASE 2"/>
    <property type="match status" value="1"/>
</dbReference>
<dbReference type="Pfam" id="PF08244">
    <property type="entry name" value="Glyco_hydro_32C"/>
    <property type="match status" value="1"/>
</dbReference>
<dbReference type="Pfam" id="PF00251">
    <property type="entry name" value="Glyco_hydro_32N"/>
    <property type="match status" value="1"/>
</dbReference>
<dbReference type="SMART" id="SM00640">
    <property type="entry name" value="Glyco_32"/>
    <property type="match status" value="1"/>
</dbReference>
<dbReference type="SUPFAM" id="SSF75005">
    <property type="entry name" value="Arabinanase/levansucrase/invertase"/>
    <property type="match status" value="1"/>
</dbReference>
<dbReference type="SUPFAM" id="SSF49899">
    <property type="entry name" value="Concanavalin A-like lectins/glucanases"/>
    <property type="match status" value="1"/>
</dbReference>
<dbReference type="PROSITE" id="PS00609">
    <property type="entry name" value="GLYCOSYL_HYDROL_F32"/>
    <property type="match status" value="1"/>
</dbReference>
<evidence type="ECO:0000250" key="1"/>
<evidence type="ECO:0000255" key="2"/>
<evidence type="ECO:0000255" key="3">
    <source>
        <dbReference type="PROSITE-ProRule" id="PRU10067"/>
    </source>
</evidence>
<evidence type="ECO:0000269" key="4">
    <source>
    </source>
</evidence>
<evidence type="ECO:0000305" key="5"/>
<name>INV1_YEASX</name>